<proteinExistence type="evidence at protein level"/>
<reference key="1">
    <citation type="journal article" date="2005" name="Science">
        <title>The transcriptional landscape of the mammalian genome.</title>
        <authorList>
            <person name="Carninci P."/>
            <person name="Kasukawa T."/>
            <person name="Katayama S."/>
            <person name="Gough J."/>
            <person name="Frith M.C."/>
            <person name="Maeda N."/>
            <person name="Oyama R."/>
            <person name="Ravasi T."/>
            <person name="Lenhard B."/>
            <person name="Wells C."/>
            <person name="Kodzius R."/>
            <person name="Shimokawa K."/>
            <person name="Bajic V.B."/>
            <person name="Brenner S.E."/>
            <person name="Batalov S."/>
            <person name="Forrest A.R."/>
            <person name="Zavolan M."/>
            <person name="Davis M.J."/>
            <person name="Wilming L.G."/>
            <person name="Aidinis V."/>
            <person name="Allen J.E."/>
            <person name="Ambesi-Impiombato A."/>
            <person name="Apweiler R."/>
            <person name="Aturaliya R.N."/>
            <person name="Bailey T.L."/>
            <person name="Bansal M."/>
            <person name="Baxter L."/>
            <person name="Beisel K.W."/>
            <person name="Bersano T."/>
            <person name="Bono H."/>
            <person name="Chalk A.M."/>
            <person name="Chiu K.P."/>
            <person name="Choudhary V."/>
            <person name="Christoffels A."/>
            <person name="Clutterbuck D.R."/>
            <person name="Crowe M.L."/>
            <person name="Dalla E."/>
            <person name="Dalrymple B.P."/>
            <person name="de Bono B."/>
            <person name="Della Gatta G."/>
            <person name="di Bernardo D."/>
            <person name="Down T."/>
            <person name="Engstrom P."/>
            <person name="Fagiolini M."/>
            <person name="Faulkner G."/>
            <person name="Fletcher C.F."/>
            <person name="Fukushima T."/>
            <person name="Furuno M."/>
            <person name="Futaki S."/>
            <person name="Gariboldi M."/>
            <person name="Georgii-Hemming P."/>
            <person name="Gingeras T.R."/>
            <person name="Gojobori T."/>
            <person name="Green R.E."/>
            <person name="Gustincich S."/>
            <person name="Harbers M."/>
            <person name="Hayashi Y."/>
            <person name="Hensch T.K."/>
            <person name="Hirokawa N."/>
            <person name="Hill D."/>
            <person name="Huminiecki L."/>
            <person name="Iacono M."/>
            <person name="Ikeo K."/>
            <person name="Iwama A."/>
            <person name="Ishikawa T."/>
            <person name="Jakt M."/>
            <person name="Kanapin A."/>
            <person name="Katoh M."/>
            <person name="Kawasawa Y."/>
            <person name="Kelso J."/>
            <person name="Kitamura H."/>
            <person name="Kitano H."/>
            <person name="Kollias G."/>
            <person name="Krishnan S.P."/>
            <person name="Kruger A."/>
            <person name="Kummerfeld S.K."/>
            <person name="Kurochkin I.V."/>
            <person name="Lareau L.F."/>
            <person name="Lazarevic D."/>
            <person name="Lipovich L."/>
            <person name="Liu J."/>
            <person name="Liuni S."/>
            <person name="McWilliam S."/>
            <person name="Madan Babu M."/>
            <person name="Madera M."/>
            <person name="Marchionni L."/>
            <person name="Matsuda H."/>
            <person name="Matsuzawa S."/>
            <person name="Miki H."/>
            <person name="Mignone F."/>
            <person name="Miyake S."/>
            <person name="Morris K."/>
            <person name="Mottagui-Tabar S."/>
            <person name="Mulder N."/>
            <person name="Nakano N."/>
            <person name="Nakauchi H."/>
            <person name="Ng P."/>
            <person name="Nilsson R."/>
            <person name="Nishiguchi S."/>
            <person name="Nishikawa S."/>
            <person name="Nori F."/>
            <person name="Ohara O."/>
            <person name="Okazaki Y."/>
            <person name="Orlando V."/>
            <person name="Pang K.C."/>
            <person name="Pavan W.J."/>
            <person name="Pavesi G."/>
            <person name="Pesole G."/>
            <person name="Petrovsky N."/>
            <person name="Piazza S."/>
            <person name="Reed J."/>
            <person name="Reid J.F."/>
            <person name="Ring B.Z."/>
            <person name="Ringwald M."/>
            <person name="Rost B."/>
            <person name="Ruan Y."/>
            <person name="Salzberg S.L."/>
            <person name="Sandelin A."/>
            <person name="Schneider C."/>
            <person name="Schoenbach C."/>
            <person name="Sekiguchi K."/>
            <person name="Semple C.A."/>
            <person name="Seno S."/>
            <person name="Sessa L."/>
            <person name="Sheng Y."/>
            <person name="Shibata Y."/>
            <person name="Shimada H."/>
            <person name="Shimada K."/>
            <person name="Silva D."/>
            <person name="Sinclair B."/>
            <person name="Sperling S."/>
            <person name="Stupka E."/>
            <person name="Sugiura K."/>
            <person name="Sultana R."/>
            <person name="Takenaka Y."/>
            <person name="Taki K."/>
            <person name="Tammoja K."/>
            <person name="Tan S.L."/>
            <person name="Tang S."/>
            <person name="Taylor M.S."/>
            <person name="Tegner J."/>
            <person name="Teichmann S.A."/>
            <person name="Ueda H.R."/>
            <person name="van Nimwegen E."/>
            <person name="Verardo R."/>
            <person name="Wei C.L."/>
            <person name="Yagi K."/>
            <person name="Yamanishi H."/>
            <person name="Zabarovsky E."/>
            <person name="Zhu S."/>
            <person name="Zimmer A."/>
            <person name="Hide W."/>
            <person name="Bult C."/>
            <person name="Grimmond S.M."/>
            <person name="Teasdale R.D."/>
            <person name="Liu E.T."/>
            <person name="Brusic V."/>
            <person name="Quackenbush J."/>
            <person name="Wahlestedt C."/>
            <person name="Mattick J.S."/>
            <person name="Hume D.A."/>
            <person name="Kai C."/>
            <person name="Sasaki D."/>
            <person name="Tomaru Y."/>
            <person name="Fukuda S."/>
            <person name="Kanamori-Katayama M."/>
            <person name="Suzuki M."/>
            <person name="Aoki J."/>
            <person name="Arakawa T."/>
            <person name="Iida J."/>
            <person name="Imamura K."/>
            <person name="Itoh M."/>
            <person name="Kato T."/>
            <person name="Kawaji H."/>
            <person name="Kawagashira N."/>
            <person name="Kawashima T."/>
            <person name="Kojima M."/>
            <person name="Kondo S."/>
            <person name="Konno H."/>
            <person name="Nakano K."/>
            <person name="Ninomiya N."/>
            <person name="Nishio T."/>
            <person name="Okada M."/>
            <person name="Plessy C."/>
            <person name="Shibata K."/>
            <person name="Shiraki T."/>
            <person name="Suzuki S."/>
            <person name="Tagami M."/>
            <person name="Waki K."/>
            <person name="Watahiki A."/>
            <person name="Okamura-Oho Y."/>
            <person name="Suzuki H."/>
            <person name="Kawai J."/>
            <person name="Hayashizaki Y."/>
        </authorList>
    </citation>
    <scope>NUCLEOTIDE SEQUENCE [LARGE SCALE MRNA] (ISOFORM 2)</scope>
    <source>
        <strain>C57BL/6J</strain>
        <tissue>Hypothalamus</tissue>
    </source>
</reference>
<reference key="2">
    <citation type="journal article" date="2004" name="Genome Res.">
        <title>The status, quality, and expansion of the NIH full-length cDNA project: the Mammalian Gene Collection (MGC).</title>
        <authorList>
            <consortium name="The MGC Project Team"/>
        </authorList>
    </citation>
    <scope>NUCLEOTIDE SEQUENCE [LARGE SCALE MRNA] (ISOFORM 1)</scope>
    <source>
        <strain>FVB/N</strain>
        <tissue>Mammary tumor</tissue>
    </source>
</reference>
<reference key="3">
    <citation type="journal article" date="2007" name="Science">
        <title>ATM and ATR substrate analysis reveals extensive protein networks responsive to DNA damage.</title>
        <authorList>
            <person name="Matsuoka S."/>
            <person name="Ballif B.A."/>
            <person name="Smogorzewska A."/>
            <person name="McDonald E.R. III"/>
            <person name="Hurov K.E."/>
            <person name="Luo J."/>
            <person name="Bakalarski C.E."/>
            <person name="Zhao Z."/>
            <person name="Solimini N."/>
            <person name="Lerenthal Y."/>
            <person name="Shiloh Y."/>
            <person name="Gygi S.P."/>
            <person name="Elledge S.J."/>
        </authorList>
    </citation>
    <scope>IDENTIFICATION BY MASS SPECTROMETRY [LARGE SCALE ANALYSIS]</scope>
    <source>
        <tissue>Embryonic fibroblast</tissue>
    </source>
</reference>
<reference key="4">
    <citation type="journal article" date="2010" name="Cell">
        <title>A tissue-specific atlas of mouse protein phosphorylation and expression.</title>
        <authorList>
            <person name="Huttlin E.L."/>
            <person name="Jedrychowski M.P."/>
            <person name="Elias J.E."/>
            <person name="Goswami T."/>
            <person name="Rad R."/>
            <person name="Beausoleil S.A."/>
            <person name="Villen J."/>
            <person name="Haas W."/>
            <person name="Sowa M.E."/>
            <person name="Gygi S.P."/>
        </authorList>
    </citation>
    <scope>PHOSPHORYLATION [LARGE SCALE ANALYSIS] AT SER-688</scope>
    <scope>IDENTIFICATION BY MASS SPECTROMETRY [LARGE SCALE ANALYSIS]</scope>
    <source>
        <tissue>Liver</tissue>
        <tissue>Spleen</tissue>
        <tissue>Testis</tissue>
    </source>
</reference>
<keyword id="KW-0025">Alternative splicing</keyword>
<keyword id="KW-0067">ATP-binding</keyword>
<keyword id="KW-0460">Magnesium</keyword>
<keyword id="KW-0464">Manganese</keyword>
<keyword id="KW-0479">Metal-binding</keyword>
<keyword id="KW-0507">mRNA processing</keyword>
<keyword id="KW-0547">Nucleotide-binding</keyword>
<keyword id="KW-0548">Nucleotidyltransferase</keyword>
<keyword id="KW-0539">Nucleus</keyword>
<keyword id="KW-0597">Phosphoprotein</keyword>
<keyword id="KW-1185">Reference proteome</keyword>
<keyword id="KW-0694">RNA-binding</keyword>
<keyword id="KW-0808">Transferase</keyword>
<keyword id="KW-0862">Zinc</keyword>
<keyword id="KW-0863">Zinc-finger</keyword>
<name>STPAP_MOUSE</name>
<comment type="function">
    <text evidence="2">Poly(A) polymerase that creates the 3'-poly(A) tail of specific pre-mRNAs. Localizes to nuclear speckles together with PIP5K1A and mediates polyadenylation of a select set of mRNAs, such as HMOX1. In addition to polyadenylation, it is also required for the 3'-end cleavage of pre-mRNAs: binds to the 3'UTR of targeted pre-mRNAs and promotes the recruitment and assembly of the CPSF complex on the 3'UTR of pre-mRNAs. In addition to adenylyltransferase activity, also has uridylyltransferase activity. However, the ATP ratio is higher than UTP in cells, suggesting that it functions primarily as a poly(A) polymerase. Acts as a specific terminal uridylyltransferase for U6 snRNA in vitro: responsible for a controlled elongation reaction that results in the restoration of the four 3'-terminal UMP-residues found in newly transcribed U6 snRNA. Not involved in replication-dependent histone mRNA degradation.</text>
</comment>
<comment type="catalytic activity">
    <reaction evidence="2">
        <text>RNA(n) + UTP = RNA(n)-3'-uridine ribonucleotide + diphosphate</text>
        <dbReference type="Rhea" id="RHEA:14785"/>
        <dbReference type="Rhea" id="RHEA-COMP:14527"/>
        <dbReference type="Rhea" id="RHEA-COMP:17348"/>
        <dbReference type="ChEBI" id="CHEBI:33019"/>
        <dbReference type="ChEBI" id="CHEBI:46398"/>
        <dbReference type="ChEBI" id="CHEBI:140395"/>
        <dbReference type="ChEBI" id="CHEBI:173116"/>
        <dbReference type="EC" id="2.7.7.52"/>
    </reaction>
</comment>
<comment type="catalytic activity">
    <reaction evidence="2">
        <text>RNA(n) + ATP = RNA(n)-3'-adenine ribonucleotide + diphosphate</text>
        <dbReference type="Rhea" id="RHEA:11332"/>
        <dbReference type="Rhea" id="RHEA-COMP:14527"/>
        <dbReference type="Rhea" id="RHEA-COMP:17347"/>
        <dbReference type="ChEBI" id="CHEBI:30616"/>
        <dbReference type="ChEBI" id="CHEBI:33019"/>
        <dbReference type="ChEBI" id="CHEBI:140395"/>
        <dbReference type="ChEBI" id="CHEBI:173115"/>
        <dbReference type="EC" id="2.7.7.19"/>
    </reaction>
</comment>
<comment type="cofactor">
    <cofactor evidence="2">
        <name>Mg(2+)</name>
        <dbReference type="ChEBI" id="CHEBI:18420"/>
    </cofactor>
    <cofactor evidence="3">
        <name>Mn(2+)</name>
        <dbReference type="ChEBI" id="CHEBI:29035"/>
    </cofactor>
    <text evidence="2">Binds 1 divalent cation per subunit.</text>
</comment>
<comment type="activity regulation">
    <text evidence="2">Adenylyltransferase activity is specifically phosphatidylinositol 4,5-bisphosphate (PtdIns(4,5)P2).</text>
</comment>
<comment type="subunit">
    <text evidence="2">Associates with the cleavage and polyadenylation specificity factor (CPSF) complex. Interacts with CPSF1 and CPSF3; the interaction is direct. Interacts with PIP5K1A.</text>
</comment>
<comment type="subcellular location">
    <subcellularLocation>
        <location evidence="2">Nucleus</location>
        <location evidence="2">Nucleolus</location>
    </subcellularLocation>
    <subcellularLocation>
        <location evidence="2">Nucleus speckle</location>
    </subcellularLocation>
</comment>
<comment type="alternative products">
    <event type="alternative splicing"/>
    <isoform>
        <id>Q8R3F9-1</id>
        <name>1</name>
        <sequence type="displayed"/>
    </isoform>
    <isoform>
        <id>Q8R3F9-2</id>
        <name>2</name>
        <sequence type="described" ref="VSP_021201 VSP_021202"/>
    </isoform>
</comment>
<comment type="domain">
    <text evidence="2">The zinc-finger domain is required for terminal uridylyltransferase activity. Together with the RRM domain, binds the 5'-area of U6 snRNA.</text>
</comment>
<comment type="domain">
    <text evidence="2">The RRM domain is required for terminal uridylyltransferase activity. Together with the zinc-finger domain, binds the 5'-area of U6 snRNA.</text>
</comment>
<comment type="domain">
    <text evidence="2">The proline-rich region is dispensable for terminal uridylyltransferase activity.</text>
</comment>
<comment type="PTM">
    <text evidence="2">Phosphorylated by CK1 in the proline-rich (Pro-rich) region.</text>
</comment>
<comment type="similarity">
    <text evidence="9">Belongs to the DNA polymerase type-B-like family.</text>
</comment>
<gene>
    <name type="primary">Tut1</name>
    <name type="synonym">Rbm21</name>
</gene>
<accession>Q8R3F9</accession>
<accession>Q3UUH3</accession>
<organism>
    <name type="scientific">Mus musculus</name>
    <name type="common">Mouse</name>
    <dbReference type="NCBI Taxonomy" id="10090"/>
    <lineage>
        <taxon>Eukaryota</taxon>
        <taxon>Metazoa</taxon>
        <taxon>Chordata</taxon>
        <taxon>Craniata</taxon>
        <taxon>Vertebrata</taxon>
        <taxon>Euteleostomi</taxon>
        <taxon>Mammalia</taxon>
        <taxon>Eutheria</taxon>
        <taxon>Euarchontoglires</taxon>
        <taxon>Glires</taxon>
        <taxon>Rodentia</taxon>
        <taxon>Myomorpha</taxon>
        <taxon>Muroidea</taxon>
        <taxon>Muridae</taxon>
        <taxon>Murinae</taxon>
        <taxon>Mus</taxon>
        <taxon>Mus</taxon>
    </lineage>
</organism>
<evidence type="ECO:0000250" key="1">
    <source>
        <dbReference type="UniProtKB" id="Q3MHT4"/>
    </source>
</evidence>
<evidence type="ECO:0000250" key="2">
    <source>
        <dbReference type="UniProtKB" id="Q9H6E5"/>
    </source>
</evidence>
<evidence type="ECO:0000250" key="3">
    <source>
        <dbReference type="UniProtKB" id="Q9NVV4"/>
    </source>
</evidence>
<evidence type="ECO:0000255" key="4"/>
<evidence type="ECO:0000255" key="5">
    <source>
        <dbReference type="PROSITE-ProRule" id="PRU00130"/>
    </source>
</evidence>
<evidence type="ECO:0000255" key="6">
    <source>
        <dbReference type="PROSITE-ProRule" id="PRU00176"/>
    </source>
</evidence>
<evidence type="ECO:0000256" key="7">
    <source>
        <dbReference type="SAM" id="MobiDB-lite"/>
    </source>
</evidence>
<evidence type="ECO:0000303" key="8">
    <source>
    </source>
</evidence>
<evidence type="ECO:0000305" key="9"/>
<evidence type="ECO:0007744" key="10">
    <source>
    </source>
</evidence>
<protein>
    <recommendedName>
        <fullName>Speckle targeted PIP5K1A-regulated poly(A) polymerase</fullName>
        <shortName>Star-PAP</shortName>
        <ecNumber evidence="2">2.7.7.19</ecNumber>
    </recommendedName>
    <alternativeName>
        <fullName>RNA-binding motif protein 21</fullName>
        <shortName>RNA-binding protein 21</shortName>
    </alternativeName>
    <alternativeName>
        <fullName>U6 snRNA-specific terminal uridylyltransferase 1</fullName>
        <shortName>U6-TUTase</shortName>
        <ecNumber evidence="2">2.7.7.52</ecNumber>
    </alternativeName>
</protein>
<feature type="chain" id="PRO_0000254187" description="Speckle targeted PIP5K1A-regulated poly(A) polymerase">
    <location>
        <begin position="1"/>
        <end position="869"/>
    </location>
</feature>
<feature type="domain" description="RRM" evidence="6">
    <location>
        <begin position="56"/>
        <end position="128"/>
    </location>
</feature>
<feature type="domain" description="PAP-associated" evidence="4">
    <location>
        <begin position="494"/>
        <end position="552"/>
    </location>
</feature>
<feature type="zinc finger region" description="Matrin-type" evidence="5">
    <location>
        <begin position="16"/>
        <end position="46"/>
    </location>
</feature>
<feature type="region of interest" description="Disordered" evidence="7">
    <location>
        <begin position="114"/>
        <end position="144"/>
    </location>
</feature>
<feature type="region of interest" description="Disordered" evidence="7">
    <location>
        <begin position="226"/>
        <end position="247"/>
    </location>
</feature>
<feature type="region of interest" description="Disordered" evidence="7">
    <location>
        <begin position="259"/>
        <end position="335"/>
    </location>
</feature>
<feature type="region of interest" description="KA1; binds the bulging loops of U6 snRNA but is dispensable for terminal uridylyltransferase activity" evidence="2">
    <location>
        <begin position="601"/>
        <end position="869"/>
    </location>
</feature>
<feature type="region of interest" description="Disordered" evidence="7">
    <location>
        <begin position="640"/>
        <end position="689"/>
    </location>
</feature>
<feature type="region of interest" description="Disordered" evidence="7">
    <location>
        <begin position="735"/>
        <end position="757"/>
    </location>
</feature>
<feature type="region of interest" description="Disordered" evidence="7">
    <location>
        <begin position="775"/>
        <end position="796"/>
    </location>
</feature>
<feature type="region of interest" description="Disordered" evidence="7">
    <location>
        <begin position="803"/>
        <end position="822"/>
    </location>
</feature>
<feature type="compositionally biased region" description="Polar residues" evidence="7">
    <location>
        <begin position="266"/>
        <end position="276"/>
    </location>
</feature>
<feature type="compositionally biased region" description="Polar residues" evidence="7">
    <location>
        <begin position="283"/>
        <end position="299"/>
    </location>
</feature>
<feature type="compositionally biased region" description="Basic and acidic residues" evidence="7">
    <location>
        <begin position="314"/>
        <end position="335"/>
    </location>
</feature>
<feature type="compositionally biased region" description="Basic and acidic residues" evidence="7">
    <location>
        <begin position="671"/>
        <end position="689"/>
    </location>
</feature>
<feature type="binding site" evidence="2">
    <location>
        <position position="205"/>
    </location>
    <ligand>
        <name>ATP</name>
        <dbReference type="ChEBI" id="CHEBI:30616"/>
    </ligand>
</feature>
<feature type="binding site" evidence="2">
    <location>
        <position position="216"/>
    </location>
    <ligand>
        <name>Mg(2+)</name>
        <dbReference type="ChEBI" id="CHEBI:18420"/>
        <note>catalytic</note>
    </ligand>
</feature>
<feature type="binding site" evidence="2">
    <location>
        <position position="216"/>
    </location>
    <ligand>
        <name>UTP</name>
        <dbReference type="ChEBI" id="CHEBI:46398"/>
    </ligand>
</feature>
<feature type="binding site" evidence="2">
    <location>
        <position position="218"/>
    </location>
    <ligand>
        <name>Mg(2+)</name>
        <dbReference type="ChEBI" id="CHEBI:18420"/>
        <note>catalytic</note>
    </ligand>
</feature>
<feature type="binding site" evidence="2">
    <location>
        <position position="218"/>
    </location>
    <ligand>
        <name>UTP</name>
        <dbReference type="ChEBI" id="CHEBI:46398"/>
    </ligand>
</feature>
<feature type="binding site" evidence="2">
    <location>
        <position position="395"/>
    </location>
    <ligand>
        <name>ATP</name>
        <dbReference type="ChEBI" id="CHEBI:30616"/>
    </ligand>
</feature>
<feature type="binding site" evidence="2">
    <location>
        <position position="395"/>
    </location>
    <ligand>
        <name>UTP</name>
        <dbReference type="ChEBI" id="CHEBI:46398"/>
    </ligand>
</feature>
<feature type="binding site" evidence="2">
    <location>
        <position position="417"/>
    </location>
    <ligand>
        <name>UTP</name>
        <dbReference type="ChEBI" id="CHEBI:46398"/>
    </ligand>
</feature>
<feature type="binding site" evidence="2">
    <location>
        <position position="435"/>
    </location>
    <ligand>
        <name>UTP</name>
        <dbReference type="ChEBI" id="CHEBI:46398"/>
    </ligand>
</feature>
<feature type="binding site" evidence="2">
    <location>
        <position position="552"/>
    </location>
    <ligand>
        <name>UTP</name>
        <dbReference type="ChEBI" id="CHEBI:46398"/>
    </ligand>
</feature>
<feature type="modified residue" description="Phosphoserine" evidence="10">
    <location>
        <position position="688"/>
    </location>
</feature>
<feature type="modified residue" description="Phosphoserine" evidence="1">
    <location>
        <position position="744"/>
    </location>
</feature>
<feature type="splice variant" id="VSP_021201" description="In isoform 2." evidence="8">
    <original>LALYNSRFLNLCSEM</original>
    <variation>YFCVGLKAGSKVWGI</variation>
    <location>
        <begin position="391"/>
        <end position="405"/>
    </location>
</feature>
<feature type="splice variant" id="VSP_021202" description="In isoform 2." evidence="8">
    <location>
        <begin position="406"/>
        <end position="869"/>
    </location>
</feature>
<sequence>MAAVDSDVVSLPRGRFRCCLCDVTTANRPSLDAHLKGRKHRDLVQLRATRKAQGLRSVFVSGFPRDVGSAQLSEYFQTFGPVANIVMDKDKGVFAIVEMGDISAREAVLSQPKHSLGGHGLRVRPREQKEFQSPASKSPKGVDSSSHQLVQALAEAADVGAQMVKLVELRELSEAERQLRNLVVALMQEVFTEFFPGCVVHPFGSTVNSFDVHGCDLDLFLDMGDMEETEPDPKAPKVPETSSLDSALASSLDPQALACTPASPLDSLSPTSVQESESLDFDTPSSLAPQTPDSALGSDTVTSPQSLPPVSPLQEDRKEGKQGKELELAEEASKDEKEEAAAVLELVGSILRGCVPGVYRVQTVPSARRPVVKFCHRPSGLHGDVSLSNRLALYNSRFLNLCSEMDGRVRPLVYTLRCWAQHNGLSGGGPLLNNYALTLLVIYFLQTRDPPVLPTVAQLTQRAGEGEQVEVDGWDCSFPKDASRLEPSTNVEPLSSLLAQFFSCVSCLDLSGSLLSLREGRPLMVAEGLPSDLWEGLRLGPMNLQDPFDLSHNVAANVTGRVAKRLQSCCGAAASYCRSLQYQQRSSRGRDWGLLPLLQPSSPSSLLSAKLIPLPSAPFPQVIMALVDVLREALGCHIEQGTKRRRSEGARIKDSPLGGVNKRQRLGGQEKSFEEGKEEPQGCAGDHSENEVEEMVIEVRETPQDWALLHSGPPEEELPLMTANCLDKAAEHNPMKPEVAGEGSQGETGKEASHPSSVSWRCALWHQVWQGRRRARRRLQQQTKEEGRGGPTTGAEWLAMEARVTQELKGPNSEQERPPGEPLLSFVASASQAEQTLTVAPLQDSQGLFPGLHHFLQGFIPQALKNLLK</sequence>
<dbReference type="EC" id="2.7.7.19" evidence="2"/>
<dbReference type="EC" id="2.7.7.52" evidence="2"/>
<dbReference type="EMBL" id="AK138418">
    <property type="protein sequence ID" value="BAE23652.1"/>
    <property type="molecule type" value="mRNA"/>
</dbReference>
<dbReference type="EMBL" id="BC023900">
    <property type="protein sequence ID" value="AAH23900.1"/>
    <property type="molecule type" value="mRNA"/>
</dbReference>
<dbReference type="EMBL" id="BC025499">
    <property type="protein sequence ID" value="AAH25499.1"/>
    <property type="molecule type" value="mRNA"/>
</dbReference>
<dbReference type="CCDS" id="CCDS29562.1">
    <molecule id="Q8R3F9-1"/>
</dbReference>
<dbReference type="RefSeq" id="NP_932110.1">
    <molecule id="Q8R3F9-1"/>
    <property type="nucleotide sequence ID" value="NM_197993.4"/>
</dbReference>
<dbReference type="SMR" id="Q8R3F9"/>
<dbReference type="BioGRID" id="213834">
    <property type="interactions" value="4"/>
</dbReference>
<dbReference type="FunCoup" id="Q8R3F9">
    <property type="interactions" value="3467"/>
</dbReference>
<dbReference type="STRING" id="10090.ENSMUSP00000093958"/>
<dbReference type="GlyGen" id="Q8R3F9">
    <property type="glycosylation" value="2 sites"/>
</dbReference>
<dbReference type="iPTMnet" id="Q8R3F9"/>
<dbReference type="PhosphoSitePlus" id="Q8R3F9"/>
<dbReference type="SwissPalm" id="Q8R3F9"/>
<dbReference type="jPOST" id="Q8R3F9"/>
<dbReference type="PaxDb" id="10090-ENSMUSP00000093958"/>
<dbReference type="PeptideAtlas" id="Q8R3F9"/>
<dbReference type="ProteomicsDB" id="257462">
    <molecule id="Q8R3F9-1"/>
</dbReference>
<dbReference type="ProteomicsDB" id="257463">
    <molecule id="Q8R3F9-2"/>
</dbReference>
<dbReference type="Pumba" id="Q8R3F9"/>
<dbReference type="Ensembl" id="ENSMUST00000096239.7">
    <molecule id="Q8R3F9-1"/>
    <property type="protein sequence ID" value="ENSMUSP00000093958.6"/>
    <property type="gene ID" value="ENSMUSG00000071645.7"/>
</dbReference>
<dbReference type="GeneID" id="70044"/>
<dbReference type="KEGG" id="mmu:70044"/>
<dbReference type="UCSC" id="uc008gog.1">
    <molecule id="Q8R3F9-2"/>
    <property type="organism name" value="mouse"/>
</dbReference>
<dbReference type="UCSC" id="uc008goh.1">
    <molecule id="Q8R3F9-1"/>
    <property type="organism name" value="mouse"/>
</dbReference>
<dbReference type="AGR" id="MGI:1917294"/>
<dbReference type="CTD" id="64852"/>
<dbReference type="MGI" id="MGI:1917294">
    <property type="gene designation" value="Tut1"/>
</dbReference>
<dbReference type="VEuPathDB" id="HostDB:ENSMUSG00000071645"/>
<dbReference type="eggNOG" id="KOG2277">
    <property type="taxonomic scope" value="Eukaryota"/>
</dbReference>
<dbReference type="GeneTree" id="ENSGT00940000159914"/>
<dbReference type="HOGENOM" id="CLU_018757_1_0_1"/>
<dbReference type="InParanoid" id="Q8R3F9"/>
<dbReference type="OMA" id="QDWAMQG"/>
<dbReference type="OrthoDB" id="2274644at2759"/>
<dbReference type="PhylomeDB" id="Q8R3F9"/>
<dbReference type="TreeFam" id="TF354308"/>
<dbReference type="BioGRID-ORCS" id="70044">
    <property type="hits" value="24 hits in 76 CRISPR screens"/>
</dbReference>
<dbReference type="ChiTaRS" id="Tut1">
    <property type="organism name" value="mouse"/>
</dbReference>
<dbReference type="PRO" id="PR:Q8R3F9"/>
<dbReference type="Proteomes" id="UP000000589">
    <property type="component" value="Chromosome 19"/>
</dbReference>
<dbReference type="RNAct" id="Q8R3F9">
    <property type="molecule type" value="protein"/>
</dbReference>
<dbReference type="Bgee" id="ENSMUSG00000071645">
    <property type="expression patterns" value="Expressed in ear vesicle and 169 other cell types or tissues"/>
</dbReference>
<dbReference type="GO" id="GO:0005829">
    <property type="term" value="C:cytosol"/>
    <property type="evidence" value="ECO:0007669"/>
    <property type="project" value="Ensembl"/>
</dbReference>
<dbReference type="GO" id="GO:0005847">
    <property type="term" value="C:mRNA cleavage and polyadenylation specificity factor complex"/>
    <property type="evidence" value="ECO:0000250"/>
    <property type="project" value="UniProtKB"/>
</dbReference>
<dbReference type="GO" id="GO:0016607">
    <property type="term" value="C:nuclear speck"/>
    <property type="evidence" value="ECO:0000250"/>
    <property type="project" value="UniProtKB"/>
</dbReference>
<dbReference type="GO" id="GO:0005730">
    <property type="term" value="C:nucleolus"/>
    <property type="evidence" value="ECO:0000250"/>
    <property type="project" value="UniProtKB"/>
</dbReference>
<dbReference type="GO" id="GO:0005524">
    <property type="term" value="F:ATP binding"/>
    <property type="evidence" value="ECO:0007669"/>
    <property type="project" value="UniProtKB-KW"/>
</dbReference>
<dbReference type="GO" id="GO:0019899">
    <property type="term" value="F:enzyme binding"/>
    <property type="evidence" value="ECO:0007669"/>
    <property type="project" value="Ensembl"/>
</dbReference>
<dbReference type="GO" id="GO:0140767">
    <property type="term" value="F:enzyme-substrate adaptor activity"/>
    <property type="evidence" value="ECO:0000250"/>
    <property type="project" value="UniProtKB"/>
</dbReference>
<dbReference type="GO" id="GO:0003730">
    <property type="term" value="F:mRNA 3'-UTR binding"/>
    <property type="evidence" value="ECO:0000250"/>
    <property type="project" value="UniProtKB"/>
</dbReference>
<dbReference type="GO" id="GO:1990817">
    <property type="term" value="F:poly(A) RNA polymerase activity"/>
    <property type="evidence" value="ECO:0000250"/>
    <property type="project" value="UniProtKB"/>
</dbReference>
<dbReference type="GO" id="GO:0003723">
    <property type="term" value="F:RNA binding"/>
    <property type="evidence" value="ECO:0000250"/>
    <property type="project" value="UniProtKB"/>
</dbReference>
<dbReference type="GO" id="GO:0050265">
    <property type="term" value="F:RNA uridylyltransferase activity"/>
    <property type="evidence" value="ECO:0000250"/>
    <property type="project" value="UniProtKB"/>
</dbReference>
<dbReference type="GO" id="GO:0017070">
    <property type="term" value="F:U6 snRNA binding"/>
    <property type="evidence" value="ECO:0000250"/>
    <property type="project" value="UniProtKB"/>
</dbReference>
<dbReference type="GO" id="GO:0008270">
    <property type="term" value="F:zinc ion binding"/>
    <property type="evidence" value="ECO:0007669"/>
    <property type="project" value="UniProtKB-KW"/>
</dbReference>
<dbReference type="GO" id="GO:0180010">
    <property type="term" value="P:co-transcriptional mRNA 3'-end processing, cleavage and polyadenylation pathway"/>
    <property type="evidence" value="ECO:0000250"/>
    <property type="project" value="UniProtKB"/>
</dbReference>
<dbReference type="GO" id="GO:0051252">
    <property type="term" value="P:regulation of RNA metabolic process"/>
    <property type="evidence" value="ECO:0007669"/>
    <property type="project" value="Ensembl"/>
</dbReference>
<dbReference type="GO" id="GO:0016180">
    <property type="term" value="P:snRNA processing"/>
    <property type="evidence" value="ECO:0000250"/>
    <property type="project" value="UniProtKB"/>
</dbReference>
<dbReference type="GO" id="GO:0034477">
    <property type="term" value="P:U6 snRNA 3'-end processing"/>
    <property type="evidence" value="ECO:0000250"/>
    <property type="project" value="UniProtKB"/>
</dbReference>
<dbReference type="CDD" id="cd05402">
    <property type="entry name" value="NT_PAP_TUTase"/>
    <property type="match status" value="1"/>
</dbReference>
<dbReference type="CDD" id="cd12279">
    <property type="entry name" value="RRM_TUT1"/>
    <property type="match status" value="1"/>
</dbReference>
<dbReference type="FunFam" id="3.30.460.10:FF:000124">
    <property type="entry name" value="Speckle targeted PIP5K1A-regulated poly(A) polymerase"/>
    <property type="match status" value="1"/>
</dbReference>
<dbReference type="FunFam" id="1.10.1410.10:FF:000008">
    <property type="entry name" value="speckle targeted PIP5K1A-regulated poly(A) polymerase"/>
    <property type="match status" value="1"/>
</dbReference>
<dbReference type="FunFam" id="3.30.70.330:FF:000305">
    <property type="entry name" value="speckle targeted PIP5K1A-regulated poly(A) polymerase"/>
    <property type="match status" value="1"/>
</dbReference>
<dbReference type="Gene3D" id="1.10.1410.10">
    <property type="match status" value="1"/>
</dbReference>
<dbReference type="Gene3D" id="3.30.70.330">
    <property type="match status" value="1"/>
</dbReference>
<dbReference type="Gene3D" id="3.30.460.10">
    <property type="entry name" value="Beta Polymerase, domain 2"/>
    <property type="match status" value="2"/>
</dbReference>
<dbReference type="InterPro" id="IPR003604">
    <property type="entry name" value="Matrin/U1-like-C_Znf_C2H2"/>
</dbReference>
<dbReference type="InterPro" id="IPR054708">
    <property type="entry name" value="MTPAP-like_central"/>
</dbReference>
<dbReference type="InterPro" id="IPR043519">
    <property type="entry name" value="NT_sf"/>
</dbReference>
<dbReference type="InterPro" id="IPR012677">
    <property type="entry name" value="Nucleotide-bd_a/b_plait_sf"/>
</dbReference>
<dbReference type="InterPro" id="IPR002058">
    <property type="entry name" value="PAP_assoc"/>
</dbReference>
<dbReference type="InterPro" id="IPR035979">
    <property type="entry name" value="RBD_domain_sf"/>
</dbReference>
<dbReference type="InterPro" id="IPR000504">
    <property type="entry name" value="RRM_dom"/>
</dbReference>
<dbReference type="InterPro" id="IPR034388">
    <property type="entry name" value="Star-PAP_RRM"/>
</dbReference>
<dbReference type="InterPro" id="IPR036236">
    <property type="entry name" value="Znf_C2H2_sf"/>
</dbReference>
<dbReference type="InterPro" id="IPR013087">
    <property type="entry name" value="Znf_C2H2_type"/>
</dbReference>
<dbReference type="PANTHER" id="PTHR12271">
    <property type="entry name" value="POLY A POLYMERASE CID PAP -RELATED"/>
    <property type="match status" value="1"/>
</dbReference>
<dbReference type="PANTHER" id="PTHR12271:SF127">
    <property type="entry name" value="SPECKLE TARGETED PIP5K1A-REGULATED POLY(A) POLYMERASE"/>
    <property type="match status" value="1"/>
</dbReference>
<dbReference type="Pfam" id="PF22600">
    <property type="entry name" value="MTPAP-like_central"/>
    <property type="match status" value="2"/>
</dbReference>
<dbReference type="Pfam" id="PF03828">
    <property type="entry name" value="PAP_assoc"/>
    <property type="match status" value="1"/>
</dbReference>
<dbReference type="Pfam" id="PF00076">
    <property type="entry name" value="RRM_1"/>
    <property type="match status" value="1"/>
</dbReference>
<dbReference type="Pfam" id="PF12874">
    <property type="entry name" value="zf-met"/>
    <property type="match status" value="1"/>
</dbReference>
<dbReference type="SMART" id="SM00360">
    <property type="entry name" value="RRM"/>
    <property type="match status" value="1"/>
</dbReference>
<dbReference type="SMART" id="SM00451">
    <property type="entry name" value="ZnF_U1"/>
    <property type="match status" value="1"/>
</dbReference>
<dbReference type="SUPFAM" id="SSF57667">
    <property type="entry name" value="beta-beta-alpha zinc fingers"/>
    <property type="match status" value="1"/>
</dbReference>
<dbReference type="SUPFAM" id="SSF81301">
    <property type="entry name" value="Nucleotidyltransferase"/>
    <property type="match status" value="1"/>
</dbReference>
<dbReference type="SUPFAM" id="SSF81631">
    <property type="entry name" value="PAP/OAS1 substrate-binding domain"/>
    <property type="match status" value="1"/>
</dbReference>
<dbReference type="SUPFAM" id="SSF54928">
    <property type="entry name" value="RNA-binding domain, RBD"/>
    <property type="match status" value="1"/>
</dbReference>
<dbReference type="PROSITE" id="PS50102">
    <property type="entry name" value="RRM"/>
    <property type="match status" value="1"/>
</dbReference>